<gene>
    <name evidence="1" type="primary">glgA</name>
    <name type="ordered locus">Clim_2189</name>
</gene>
<keyword id="KW-0320">Glycogen biosynthesis</keyword>
<keyword id="KW-0328">Glycosyltransferase</keyword>
<keyword id="KW-0808">Transferase</keyword>
<protein>
    <recommendedName>
        <fullName evidence="1">Glycogen synthase</fullName>
        <ecNumber evidence="1">2.4.1.21</ecNumber>
    </recommendedName>
    <alternativeName>
        <fullName evidence="1">Starch [bacterial glycogen] synthase</fullName>
    </alternativeName>
</protein>
<accession>B3EGV0</accession>
<dbReference type="EC" id="2.4.1.21" evidence="1"/>
<dbReference type="EMBL" id="CP001097">
    <property type="protein sequence ID" value="ACD91213.1"/>
    <property type="molecule type" value="Genomic_DNA"/>
</dbReference>
<dbReference type="RefSeq" id="WP_012467081.1">
    <property type="nucleotide sequence ID" value="NC_010803.1"/>
</dbReference>
<dbReference type="SMR" id="B3EGV0"/>
<dbReference type="STRING" id="290315.Clim_2189"/>
<dbReference type="CAZy" id="GT5">
    <property type="family name" value="Glycosyltransferase Family 5"/>
</dbReference>
<dbReference type="KEGG" id="cli:Clim_2189"/>
<dbReference type="eggNOG" id="COG0297">
    <property type="taxonomic scope" value="Bacteria"/>
</dbReference>
<dbReference type="HOGENOM" id="CLU_009583_18_0_10"/>
<dbReference type="OrthoDB" id="9808590at2"/>
<dbReference type="UniPathway" id="UPA00164"/>
<dbReference type="Proteomes" id="UP000008841">
    <property type="component" value="Chromosome"/>
</dbReference>
<dbReference type="GO" id="GO:0009011">
    <property type="term" value="F:alpha-1,4-glucan glucosyltransferase (ADP-glucose donor) activity"/>
    <property type="evidence" value="ECO:0007669"/>
    <property type="project" value="UniProtKB-UniRule"/>
</dbReference>
<dbReference type="GO" id="GO:0004373">
    <property type="term" value="F:alpha-1,4-glucan glucosyltransferase (UDP-glucose donor) activity"/>
    <property type="evidence" value="ECO:0007669"/>
    <property type="project" value="InterPro"/>
</dbReference>
<dbReference type="GO" id="GO:0005978">
    <property type="term" value="P:glycogen biosynthetic process"/>
    <property type="evidence" value="ECO:0007669"/>
    <property type="project" value="UniProtKB-UniRule"/>
</dbReference>
<dbReference type="CDD" id="cd03791">
    <property type="entry name" value="GT5_Glycogen_synthase_DULL1-like"/>
    <property type="match status" value="1"/>
</dbReference>
<dbReference type="Gene3D" id="3.40.50.2000">
    <property type="entry name" value="Glycogen Phosphorylase B"/>
    <property type="match status" value="2"/>
</dbReference>
<dbReference type="HAMAP" id="MF_00484">
    <property type="entry name" value="Glycogen_synth"/>
    <property type="match status" value="1"/>
</dbReference>
<dbReference type="InterPro" id="IPR001296">
    <property type="entry name" value="Glyco_trans_1"/>
</dbReference>
<dbReference type="InterPro" id="IPR011835">
    <property type="entry name" value="GS/SS"/>
</dbReference>
<dbReference type="InterPro" id="IPR013534">
    <property type="entry name" value="Starch_synth_cat_dom"/>
</dbReference>
<dbReference type="NCBIfam" id="TIGR02095">
    <property type="entry name" value="glgA"/>
    <property type="match status" value="1"/>
</dbReference>
<dbReference type="NCBIfam" id="NF010698">
    <property type="entry name" value="PRK14098.1"/>
    <property type="match status" value="1"/>
</dbReference>
<dbReference type="PANTHER" id="PTHR45825:SF11">
    <property type="entry name" value="ALPHA AMYLASE DOMAIN-CONTAINING PROTEIN"/>
    <property type="match status" value="1"/>
</dbReference>
<dbReference type="PANTHER" id="PTHR45825">
    <property type="entry name" value="GRANULE-BOUND STARCH SYNTHASE 1, CHLOROPLASTIC/AMYLOPLASTIC"/>
    <property type="match status" value="1"/>
</dbReference>
<dbReference type="Pfam" id="PF08323">
    <property type="entry name" value="Glyco_transf_5"/>
    <property type="match status" value="1"/>
</dbReference>
<dbReference type="Pfam" id="PF00534">
    <property type="entry name" value="Glycos_transf_1"/>
    <property type="match status" value="1"/>
</dbReference>
<dbReference type="SUPFAM" id="SSF53756">
    <property type="entry name" value="UDP-Glycosyltransferase/glycogen phosphorylase"/>
    <property type="match status" value="1"/>
</dbReference>
<organism>
    <name type="scientific">Chlorobium limicola (strain DSM 245 / NBRC 103803 / 6330)</name>
    <dbReference type="NCBI Taxonomy" id="290315"/>
    <lineage>
        <taxon>Bacteria</taxon>
        <taxon>Pseudomonadati</taxon>
        <taxon>Chlorobiota</taxon>
        <taxon>Chlorobiia</taxon>
        <taxon>Chlorobiales</taxon>
        <taxon>Chlorobiaceae</taxon>
        <taxon>Chlorobium/Pelodictyon group</taxon>
        <taxon>Chlorobium</taxon>
    </lineage>
</organism>
<proteinExistence type="inferred from homology"/>
<sequence length="489" mass="55165">MARRNFKVLYVSGEVSPFVRISALADFMASFPQALEEEGFEARIMMPKYGTINDRKFRLHDVLRLSDIEVNLRDKTELLHVKVTALPSSKIQTYFLYNEKYFKRNGLFTDVHNGGDLKGNTEKVIFFNVGVLETLQRLGWKPDIIHCHDWYAGLLPLLLKTVYASNSFFSDVKTVLTVHNVYRQGILPFKVFQKLLPEEVSSALYRAGDNVNMLYTGAEHADLLTTTSRLYADEIVGNGSDTYGLGTVVEERKSTFHGILNGIDTRQWNPSTDKLIKKRYAADRLEGKLDNKKALLDEAGLPFTEGRPLAGIIIGFDAFQGAELLKESLVKLVELDMQLIICGSGDKEYEKYFQDFAAEYPEQVSVRTDYADTLLHLAIAGFDMLLMPGRIESCGMLQLFAMSYGTIPVAYAGGGIVETIDAVTDKSGSGFLFYDYTADAFAGKVQEALDLYHDEERWLQLVLEAMGKDFSWKNSAGEYDQLYRKLLEE</sequence>
<reference key="1">
    <citation type="submission" date="2008-05" db="EMBL/GenBank/DDBJ databases">
        <title>Complete sequence of Chlorobium limicola DSM 245.</title>
        <authorList>
            <consortium name="US DOE Joint Genome Institute"/>
            <person name="Lucas S."/>
            <person name="Copeland A."/>
            <person name="Lapidus A."/>
            <person name="Glavina del Rio T."/>
            <person name="Dalin E."/>
            <person name="Tice H."/>
            <person name="Bruce D."/>
            <person name="Goodwin L."/>
            <person name="Pitluck S."/>
            <person name="Schmutz J."/>
            <person name="Larimer F."/>
            <person name="Land M."/>
            <person name="Hauser L."/>
            <person name="Kyrpides N."/>
            <person name="Ovchinnikova G."/>
            <person name="Zhao F."/>
            <person name="Li T."/>
            <person name="Liu Z."/>
            <person name="Overmann J."/>
            <person name="Bryant D.A."/>
            <person name="Richardson P."/>
        </authorList>
    </citation>
    <scope>NUCLEOTIDE SEQUENCE [LARGE SCALE GENOMIC DNA]</scope>
    <source>
        <strain>DSM 245 / NBRC 103803 / 6330</strain>
    </source>
</reference>
<comment type="function">
    <text evidence="1">Synthesizes alpha-1,4-glucan chains using ADP-glucose.</text>
</comment>
<comment type="catalytic activity">
    <reaction evidence="1">
        <text>[(1-&gt;4)-alpha-D-glucosyl](n) + ADP-alpha-D-glucose = [(1-&gt;4)-alpha-D-glucosyl](n+1) + ADP + H(+)</text>
        <dbReference type="Rhea" id="RHEA:18189"/>
        <dbReference type="Rhea" id="RHEA-COMP:9584"/>
        <dbReference type="Rhea" id="RHEA-COMP:9587"/>
        <dbReference type="ChEBI" id="CHEBI:15378"/>
        <dbReference type="ChEBI" id="CHEBI:15444"/>
        <dbReference type="ChEBI" id="CHEBI:57498"/>
        <dbReference type="ChEBI" id="CHEBI:456216"/>
        <dbReference type="EC" id="2.4.1.21"/>
    </reaction>
</comment>
<comment type="pathway">
    <text evidence="1">Glycan biosynthesis; glycogen biosynthesis.</text>
</comment>
<comment type="similarity">
    <text evidence="1">Belongs to the glycosyltransferase 1 family. Bacterial/plant glycogen synthase subfamily.</text>
</comment>
<feature type="chain" id="PRO_1000126057" description="Glycogen synthase">
    <location>
        <begin position="1"/>
        <end position="489"/>
    </location>
</feature>
<feature type="binding site" evidence="1">
    <location>
        <position position="20"/>
    </location>
    <ligand>
        <name>ADP-alpha-D-glucose</name>
        <dbReference type="ChEBI" id="CHEBI:57498"/>
    </ligand>
</feature>
<name>GLGA_CHLL2</name>
<evidence type="ECO:0000255" key="1">
    <source>
        <dbReference type="HAMAP-Rule" id="MF_00484"/>
    </source>
</evidence>